<sequence length="57" mass="5799">MLFKSLQSITSVNSIQKNQISSISLGSSQSNNNAALLDAAAFVAIPGLLTAAAVAHI</sequence>
<keyword id="KW-1185">Reference proteome</keyword>
<comment type="developmental stage">
    <text evidence="1">Expressed in prestalk pstA and pstO cells in the slug stage. Preferentially restricted to pstO cells during culmination.</text>
</comment>
<gene>
    <name type="ORF">DDB_G0283465</name>
</gene>
<name>Y3465_DICDI</name>
<feature type="chain" id="PRO_0000392658" description="Uncharacterized protein DDB_G0283465">
    <location>
        <begin position="1"/>
        <end position="57"/>
    </location>
</feature>
<accession>Q54QZ9</accession>
<protein>
    <recommendedName>
        <fullName>Uncharacterized protein DDB_G0283465</fullName>
    </recommendedName>
</protein>
<reference key="1">
    <citation type="journal article" date="2005" name="Nature">
        <title>The genome of the social amoeba Dictyostelium discoideum.</title>
        <authorList>
            <person name="Eichinger L."/>
            <person name="Pachebat J.A."/>
            <person name="Gloeckner G."/>
            <person name="Rajandream M.A."/>
            <person name="Sucgang R."/>
            <person name="Berriman M."/>
            <person name="Song J."/>
            <person name="Olsen R."/>
            <person name="Szafranski K."/>
            <person name="Xu Q."/>
            <person name="Tunggal B."/>
            <person name="Kummerfeld S."/>
            <person name="Madera M."/>
            <person name="Konfortov B.A."/>
            <person name="Rivero F."/>
            <person name="Bankier A.T."/>
            <person name="Lehmann R."/>
            <person name="Hamlin N."/>
            <person name="Davies R."/>
            <person name="Gaudet P."/>
            <person name="Fey P."/>
            <person name="Pilcher K."/>
            <person name="Chen G."/>
            <person name="Saunders D."/>
            <person name="Sodergren E.J."/>
            <person name="Davis P."/>
            <person name="Kerhornou A."/>
            <person name="Nie X."/>
            <person name="Hall N."/>
            <person name="Anjard C."/>
            <person name="Hemphill L."/>
            <person name="Bason N."/>
            <person name="Farbrother P."/>
            <person name="Desany B."/>
            <person name="Just E."/>
            <person name="Morio T."/>
            <person name="Rost R."/>
            <person name="Churcher C.M."/>
            <person name="Cooper J."/>
            <person name="Haydock S."/>
            <person name="van Driessche N."/>
            <person name="Cronin A."/>
            <person name="Goodhead I."/>
            <person name="Muzny D.M."/>
            <person name="Mourier T."/>
            <person name="Pain A."/>
            <person name="Lu M."/>
            <person name="Harper D."/>
            <person name="Lindsay R."/>
            <person name="Hauser H."/>
            <person name="James K.D."/>
            <person name="Quiles M."/>
            <person name="Madan Babu M."/>
            <person name="Saito T."/>
            <person name="Buchrieser C."/>
            <person name="Wardroper A."/>
            <person name="Felder M."/>
            <person name="Thangavelu M."/>
            <person name="Johnson D."/>
            <person name="Knights A."/>
            <person name="Loulseged H."/>
            <person name="Mungall K.L."/>
            <person name="Oliver K."/>
            <person name="Price C."/>
            <person name="Quail M.A."/>
            <person name="Urushihara H."/>
            <person name="Hernandez J."/>
            <person name="Rabbinowitsch E."/>
            <person name="Steffen D."/>
            <person name="Sanders M."/>
            <person name="Ma J."/>
            <person name="Kohara Y."/>
            <person name="Sharp S."/>
            <person name="Simmonds M.N."/>
            <person name="Spiegler S."/>
            <person name="Tivey A."/>
            <person name="Sugano S."/>
            <person name="White B."/>
            <person name="Walker D."/>
            <person name="Woodward J.R."/>
            <person name="Winckler T."/>
            <person name="Tanaka Y."/>
            <person name="Shaulsky G."/>
            <person name="Schleicher M."/>
            <person name="Weinstock G.M."/>
            <person name="Rosenthal A."/>
            <person name="Cox E.C."/>
            <person name="Chisholm R.L."/>
            <person name="Gibbs R.A."/>
            <person name="Loomis W.F."/>
            <person name="Platzer M."/>
            <person name="Kay R.R."/>
            <person name="Williams J.G."/>
            <person name="Dear P.H."/>
            <person name="Noegel A.A."/>
            <person name="Barrell B.G."/>
            <person name="Kuspa A."/>
        </authorList>
    </citation>
    <scope>NUCLEOTIDE SEQUENCE [LARGE SCALE GENOMIC DNA]</scope>
    <source>
        <strain>AX4</strain>
    </source>
</reference>
<reference key="2">
    <citation type="journal article" date="2003" name="Eukaryot. Cell">
        <title>Changing patterns of gene expression in Dictyostelium prestalk cell subtypes recognized by in situ hybridization with genes from microarray analyses.</title>
        <authorList>
            <person name="Maeda M."/>
            <person name="Sakamoto H."/>
            <person name="Iranfar N."/>
            <person name="Fuller D."/>
            <person name="Maruo T."/>
            <person name="Ogihara S."/>
            <person name="Morio T."/>
            <person name="Urushihara H."/>
            <person name="Tanaka Y."/>
            <person name="Loomis W.F."/>
        </authorList>
    </citation>
    <scope>DEVELOPMENTAL STAGE [LARGE SCALE ANALYSIS]</scope>
</reference>
<reference key="3">
    <citation type="journal article" date="2004" name="Int. J. Dev. Biol.">
        <title>Identification of new modes of Dd-STATa regulation of gene expression in Dictyostelium by in situ hybridisation.</title>
        <authorList>
            <person name="Shimada N."/>
            <person name="Maeda M."/>
            <person name="Urushihara H."/>
            <person name="Kawata T."/>
        </authorList>
    </citation>
    <scope>IDENTIFICATION</scope>
</reference>
<evidence type="ECO:0000269" key="1">
    <source>
    </source>
</evidence>
<dbReference type="EMBL" id="AAFI02000055">
    <property type="protein sequence ID" value="EAL65717.1"/>
    <property type="molecule type" value="Genomic_DNA"/>
</dbReference>
<dbReference type="RefSeq" id="XP_639092.1">
    <property type="nucleotide sequence ID" value="XM_634000.1"/>
</dbReference>
<dbReference type="FunCoup" id="Q54QZ9">
    <property type="interactions" value="640"/>
</dbReference>
<dbReference type="PaxDb" id="44689-DDB0230004"/>
<dbReference type="EnsemblProtists" id="EAL65717">
    <property type="protein sequence ID" value="EAL65717"/>
    <property type="gene ID" value="DDB_G0283465"/>
</dbReference>
<dbReference type="GeneID" id="8624116"/>
<dbReference type="KEGG" id="ddi:DDB_G0283465"/>
<dbReference type="dictyBase" id="DDB_G0283465"/>
<dbReference type="HOGENOM" id="CLU_210588_0_0_1"/>
<dbReference type="InParanoid" id="Q54QZ9"/>
<dbReference type="PRO" id="PR:Q54QZ9"/>
<dbReference type="Proteomes" id="UP000002195">
    <property type="component" value="Chromosome 4"/>
</dbReference>
<organism>
    <name type="scientific">Dictyostelium discoideum</name>
    <name type="common">Social amoeba</name>
    <dbReference type="NCBI Taxonomy" id="44689"/>
    <lineage>
        <taxon>Eukaryota</taxon>
        <taxon>Amoebozoa</taxon>
        <taxon>Evosea</taxon>
        <taxon>Eumycetozoa</taxon>
        <taxon>Dictyostelia</taxon>
        <taxon>Dictyosteliales</taxon>
        <taxon>Dictyosteliaceae</taxon>
        <taxon>Dictyostelium</taxon>
    </lineage>
</organism>
<proteinExistence type="evidence at transcript level"/>